<sequence>MTKQKVAILGPGSWGTALSQVLNDNGHDVRLWGNIPDQIEEINTKHTNRHYFKDIVLDKNITATLDLGQALSDVDAVLFVVPTKVTRLVARQVAAILDHKVVVMHASKGLEPETHERLSTILEEEIPAHFRSEVVVVSGPSHAEETIVRDITLITAASKDIEAAKYVQSLFSNHYFRLYTNTDVIGVETAGALKNIIAVGAGALHGLGYGDNAKAAVITRGLAEITRLGVKLGADPLTYSGLSGVGDLIVTGTSVHSRNWRAGAALGRGEKLEDIERNMGMVIEGIATTKVAYEIAQDLGVYMPITTAIYKSIYEGADIKESILGMMSNEFRSENEWH</sequence>
<organism>
    <name type="scientific">Streptococcus pyogenes serotype M4 (strain MGAS10750)</name>
    <dbReference type="NCBI Taxonomy" id="370554"/>
    <lineage>
        <taxon>Bacteria</taxon>
        <taxon>Bacillati</taxon>
        <taxon>Bacillota</taxon>
        <taxon>Bacilli</taxon>
        <taxon>Lactobacillales</taxon>
        <taxon>Streptococcaceae</taxon>
        <taxon>Streptococcus</taxon>
    </lineage>
</organism>
<proteinExistence type="inferred from homology"/>
<keyword id="KW-0963">Cytoplasm</keyword>
<keyword id="KW-0444">Lipid biosynthesis</keyword>
<keyword id="KW-0443">Lipid metabolism</keyword>
<keyword id="KW-0520">NAD</keyword>
<keyword id="KW-0521">NADP</keyword>
<keyword id="KW-0547">Nucleotide-binding</keyword>
<keyword id="KW-0560">Oxidoreductase</keyword>
<keyword id="KW-0594">Phospholipid biosynthesis</keyword>
<keyword id="KW-1208">Phospholipid metabolism</keyword>
<comment type="function">
    <text evidence="1">Catalyzes the reduction of the glycolytic intermediate dihydroxyacetone phosphate (DHAP) to sn-glycerol 3-phosphate (G3P), the key precursor for phospholipid synthesis.</text>
</comment>
<comment type="catalytic activity">
    <reaction evidence="1">
        <text>sn-glycerol 3-phosphate + NAD(+) = dihydroxyacetone phosphate + NADH + H(+)</text>
        <dbReference type="Rhea" id="RHEA:11092"/>
        <dbReference type="ChEBI" id="CHEBI:15378"/>
        <dbReference type="ChEBI" id="CHEBI:57540"/>
        <dbReference type="ChEBI" id="CHEBI:57597"/>
        <dbReference type="ChEBI" id="CHEBI:57642"/>
        <dbReference type="ChEBI" id="CHEBI:57945"/>
        <dbReference type="EC" id="1.1.1.94"/>
    </reaction>
    <physiologicalReaction direction="right-to-left" evidence="1">
        <dbReference type="Rhea" id="RHEA:11094"/>
    </physiologicalReaction>
</comment>
<comment type="catalytic activity">
    <reaction evidence="1">
        <text>sn-glycerol 3-phosphate + NADP(+) = dihydroxyacetone phosphate + NADPH + H(+)</text>
        <dbReference type="Rhea" id="RHEA:11096"/>
        <dbReference type="ChEBI" id="CHEBI:15378"/>
        <dbReference type="ChEBI" id="CHEBI:57597"/>
        <dbReference type="ChEBI" id="CHEBI:57642"/>
        <dbReference type="ChEBI" id="CHEBI:57783"/>
        <dbReference type="ChEBI" id="CHEBI:58349"/>
        <dbReference type="EC" id="1.1.1.94"/>
    </reaction>
    <physiologicalReaction direction="right-to-left" evidence="1">
        <dbReference type="Rhea" id="RHEA:11098"/>
    </physiologicalReaction>
</comment>
<comment type="pathway">
    <text evidence="1">Membrane lipid metabolism; glycerophospholipid metabolism.</text>
</comment>
<comment type="subcellular location">
    <subcellularLocation>
        <location evidence="1">Cytoplasm</location>
    </subcellularLocation>
</comment>
<comment type="similarity">
    <text evidence="1">Belongs to the NAD-dependent glycerol-3-phosphate dehydrogenase family.</text>
</comment>
<protein>
    <recommendedName>
        <fullName evidence="1">Glycerol-3-phosphate dehydrogenase [NAD(P)+]</fullName>
        <ecNumber evidence="1">1.1.1.94</ecNumber>
    </recommendedName>
    <alternativeName>
        <fullName evidence="1">NAD(P)(+)-dependent glycerol-3-phosphate dehydrogenase</fullName>
    </alternativeName>
    <alternativeName>
        <fullName evidence="1">NAD(P)H-dependent dihydroxyacetone-phosphate reductase</fullName>
    </alternativeName>
</protein>
<name>GPDA_STRPF</name>
<evidence type="ECO:0000255" key="1">
    <source>
        <dbReference type="HAMAP-Rule" id="MF_00394"/>
    </source>
</evidence>
<reference key="1">
    <citation type="journal article" date="2006" name="Proc. Natl. Acad. Sci. U.S.A.">
        <title>Molecular genetic anatomy of inter- and intraserotype variation in the human bacterial pathogen group A Streptococcus.</title>
        <authorList>
            <person name="Beres S.B."/>
            <person name="Richter E.W."/>
            <person name="Nagiec M.J."/>
            <person name="Sumby P."/>
            <person name="Porcella S.F."/>
            <person name="DeLeo F.R."/>
            <person name="Musser J.M."/>
        </authorList>
    </citation>
    <scope>NUCLEOTIDE SEQUENCE [LARGE SCALE GENOMIC DNA]</scope>
    <source>
        <strain>MGAS10750</strain>
    </source>
</reference>
<dbReference type="EC" id="1.1.1.94" evidence="1"/>
<dbReference type="EMBL" id="CP000262">
    <property type="protein sequence ID" value="ABF37139.1"/>
    <property type="molecule type" value="Genomic_DNA"/>
</dbReference>
<dbReference type="SMR" id="Q1J8M2"/>
<dbReference type="KEGG" id="spi:MGAS10750_Spy0189"/>
<dbReference type="HOGENOM" id="CLU_033449_0_2_9"/>
<dbReference type="UniPathway" id="UPA00940"/>
<dbReference type="Proteomes" id="UP000002434">
    <property type="component" value="Chromosome"/>
</dbReference>
<dbReference type="GO" id="GO:0005829">
    <property type="term" value="C:cytosol"/>
    <property type="evidence" value="ECO:0007669"/>
    <property type="project" value="TreeGrafter"/>
</dbReference>
<dbReference type="GO" id="GO:0047952">
    <property type="term" value="F:glycerol-3-phosphate dehydrogenase [NAD(P)+] activity"/>
    <property type="evidence" value="ECO:0007669"/>
    <property type="project" value="UniProtKB-UniRule"/>
</dbReference>
<dbReference type="GO" id="GO:0051287">
    <property type="term" value="F:NAD binding"/>
    <property type="evidence" value="ECO:0007669"/>
    <property type="project" value="InterPro"/>
</dbReference>
<dbReference type="GO" id="GO:0005975">
    <property type="term" value="P:carbohydrate metabolic process"/>
    <property type="evidence" value="ECO:0007669"/>
    <property type="project" value="InterPro"/>
</dbReference>
<dbReference type="GO" id="GO:0046167">
    <property type="term" value="P:glycerol-3-phosphate biosynthetic process"/>
    <property type="evidence" value="ECO:0007669"/>
    <property type="project" value="UniProtKB-UniRule"/>
</dbReference>
<dbReference type="GO" id="GO:0046168">
    <property type="term" value="P:glycerol-3-phosphate catabolic process"/>
    <property type="evidence" value="ECO:0007669"/>
    <property type="project" value="InterPro"/>
</dbReference>
<dbReference type="GO" id="GO:0006650">
    <property type="term" value="P:glycerophospholipid metabolic process"/>
    <property type="evidence" value="ECO:0007669"/>
    <property type="project" value="UniProtKB-UniRule"/>
</dbReference>
<dbReference type="GO" id="GO:0008654">
    <property type="term" value="P:phospholipid biosynthetic process"/>
    <property type="evidence" value="ECO:0007669"/>
    <property type="project" value="UniProtKB-KW"/>
</dbReference>
<dbReference type="FunFam" id="1.10.1040.10:FF:000001">
    <property type="entry name" value="Glycerol-3-phosphate dehydrogenase [NAD(P)+]"/>
    <property type="match status" value="1"/>
</dbReference>
<dbReference type="FunFam" id="3.40.50.720:FF:000019">
    <property type="entry name" value="Glycerol-3-phosphate dehydrogenase [NAD(P)+]"/>
    <property type="match status" value="1"/>
</dbReference>
<dbReference type="Gene3D" id="1.10.1040.10">
    <property type="entry name" value="N-(1-d-carboxylethyl)-l-norvaline Dehydrogenase, domain 2"/>
    <property type="match status" value="1"/>
</dbReference>
<dbReference type="Gene3D" id="3.40.50.720">
    <property type="entry name" value="NAD(P)-binding Rossmann-like Domain"/>
    <property type="match status" value="1"/>
</dbReference>
<dbReference type="HAMAP" id="MF_00394">
    <property type="entry name" value="NAD_Glyc3P_dehydrog"/>
    <property type="match status" value="1"/>
</dbReference>
<dbReference type="InterPro" id="IPR008927">
    <property type="entry name" value="6-PGluconate_DH-like_C_sf"/>
</dbReference>
<dbReference type="InterPro" id="IPR013328">
    <property type="entry name" value="6PGD_dom2"/>
</dbReference>
<dbReference type="InterPro" id="IPR006168">
    <property type="entry name" value="G3P_DH_NAD-dep"/>
</dbReference>
<dbReference type="InterPro" id="IPR006109">
    <property type="entry name" value="G3P_DH_NAD-dep_C"/>
</dbReference>
<dbReference type="InterPro" id="IPR011128">
    <property type="entry name" value="G3P_DH_NAD-dep_N"/>
</dbReference>
<dbReference type="InterPro" id="IPR036291">
    <property type="entry name" value="NAD(P)-bd_dom_sf"/>
</dbReference>
<dbReference type="NCBIfam" id="NF000940">
    <property type="entry name" value="PRK00094.1-2"/>
    <property type="match status" value="1"/>
</dbReference>
<dbReference type="NCBIfam" id="NF000941">
    <property type="entry name" value="PRK00094.1-3"/>
    <property type="match status" value="1"/>
</dbReference>
<dbReference type="NCBIfam" id="NF000942">
    <property type="entry name" value="PRK00094.1-4"/>
    <property type="match status" value="1"/>
</dbReference>
<dbReference type="PANTHER" id="PTHR11728">
    <property type="entry name" value="GLYCEROL-3-PHOSPHATE DEHYDROGENASE"/>
    <property type="match status" value="1"/>
</dbReference>
<dbReference type="PANTHER" id="PTHR11728:SF1">
    <property type="entry name" value="GLYCEROL-3-PHOSPHATE DEHYDROGENASE [NAD(+)] 2, CHLOROPLASTIC"/>
    <property type="match status" value="1"/>
</dbReference>
<dbReference type="Pfam" id="PF07479">
    <property type="entry name" value="NAD_Gly3P_dh_C"/>
    <property type="match status" value="1"/>
</dbReference>
<dbReference type="Pfam" id="PF01210">
    <property type="entry name" value="NAD_Gly3P_dh_N"/>
    <property type="match status" value="1"/>
</dbReference>
<dbReference type="PIRSF" id="PIRSF000114">
    <property type="entry name" value="Glycerol-3-P_dh"/>
    <property type="match status" value="1"/>
</dbReference>
<dbReference type="PRINTS" id="PR00077">
    <property type="entry name" value="GPDHDRGNASE"/>
</dbReference>
<dbReference type="SUPFAM" id="SSF48179">
    <property type="entry name" value="6-phosphogluconate dehydrogenase C-terminal domain-like"/>
    <property type="match status" value="1"/>
</dbReference>
<dbReference type="SUPFAM" id="SSF51735">
    <property type="entry name" value="NAD(P)-binding Rossmann-fold domains"/>
    <property type="match status" value="1"/>
</dbReference>
<dbReference type="PROSITE" id="PS00957">
    <property type="entry name" value="NAD_G3PDH"/>
    <property type="match status" value="1"/>
</dbReference>
<accession>Q1J8M2</accession>
<gene>
    <name evidence="1" type="primary">gpsA</name>
    <name type="ordered locus">MGAS10750_Spy0189</name>
</gene>
<feature type="chain" id="PRO_0000255384" description="Glycerol-3-phosphate dehydrogenase [NAD(P)+]">
    <location>
        <begin position="1"/>
        <end position="338"/>
    </location>
</feature>
<feature type="active site" description="Proton acceptor" evidence="1">
    <location>
        <position position="194"/>
    </location>
</feature>
<feature type="binding site" evidence="1">
    <location>
        <position position="13"/>
    </location>
    <ligand>
        <name>NADPH</name>
        <dbReference type="ChEBI" id="CHEBI:57783"/>
    </ligand>
</feature>
<feature type="binding site" evidence="1">
    <location>
        <position position="14"/>
    </location>
    <ligand>
        <name>NADPH</name>
        <dbReference type="ChEBI" id="CHEBI:57783"/>
    </ligand>
</feature>
<feature type="binding site" evidence="1">
    <location>
        <position position="108"/>
    </location>
    <ligand>
        <name>NADPH</name>
        <dbReference type="ChEBI" id="CHEBI:57783"/>
    </ligand>
</feature>
<feature type="binding site" evidence="1">
    <location>
        <position position="108"/>
    </location>
    <ligand>
        <name>sn-glycerol 3-phosphate</name>
        <dbReference type="ChEBI" id="CHEBI:57597"/>
    </ligand>
</feature>
<feature type="binding site" evidence="1">
    <location>
        <position position="139"/>
    </location>
    <ligand>
        <name>sn-glycerol 3-phosphate</name>
        <dbReference type="ChEBI" id="CHEBI:57597"/>
    </ligand>
</feature>
<feature type="binding site" evidence="1">
    <location>
        <position position="141"/>
    </location>
    <ligand>
        <name>sn-glycerol 3-phosphate</name>
        <dbReference type="ChEBI" id="CHEBI:57597"/>
    </ligand>
</feature>
<feature type="binding site" evidence="1">
    <location>
        <position position="143"/>
    </location>
    <ligand>
        <name>NADPH</name>
        <dbReference type="ChEBI" id="CHEBI:57783"/>
    </ligand>
</feature>
<feature type="binding site" evidence="1">
    <location>
        <position position="194"/>
    </location>
    <ligand>
        <name>sn-glycerol 3-phosphate</name>
        <dbReference type="ChEBI" id="CHEBI:57597"/>
    </ligand>
</feature>
<feature type="binding site" evidence="1">
    <location>
        <position position="247"/>
    </location>
    <ligand>
        <name>sn-glycerol 3-phosphate</name>
        <dbReference type="ChEBI" id="CHEBI:57597"/>
    </ligand>
</feature>
<feature type="binding site" evidence="1">
    <location>
        <position position="257"/>
    </location>
    <ligand>
        <name>sn-glycerol 3-phosphate</name>
        <dbReference type="ChEBI" id="CHEBI:57597"/>
    </ligand>
</feature>
<feature type="binding site" evidence="1">
    <location>
        <position position="258"/>
    </location>
    <ligand>
        <name>NADPH</name>
        <dbReference type="ChEBI" id="CHEBI:57783"/>
    </ligand>
</feature>
<feature type="binding site" evidence="1">
    <location>
        <position position="258"/>
    </location>
    <ligand>
        <name>sn-glycerol 3-phosphate</name>
        <dbReference type="ChEBI" id="CHEBI:57597"/>
    </ligand>
</feature>
<feature type="binding site" evidence="1">
    <location>
        <position position="259"/>
    </location>
    <ligand>
        <name>sn-glycerol 3-phosphate</name>
        <dbReference type="ChEBI" id="CHEBI:57597"/>
    </ligand>
</feature>
<feature type="binding site" evidence="1">
    <location>
        <position position="282"/>
    </location>
    <ligand>
        <name>NADPH</name>
        <dbReference type="ChEBI" id="CHEBI:57783"/>
    </ligand>
</feature>
<feature type="binding site" evidence="1">
    <location>
        <position position="284"/>
    </location>
    <ligand>
        <name>NADPH</name>
        <dbReference type="ChEBI" id="CHEBI:57783"/>
    </ligand>
</feature>